<keyword id="KW-0050">Antiport</keyword>
<keyword id="KW-0997">Cell inner membrane</keyword>
<keyword id="KW-1003">Cell membrane</keyword>
<keyword id="KW-0406">Ion transport</keyword>
<keyword id="KW-0472">Membrane</keyword>
<keyword id="KW-0812">Transmembrane</keyword>
<keyword id="KW-1133">Transmembrane helix</keyword>
<keyword id="KW-0813">Transport</keyword>
<organism>
    <name type="scientific">Brucella suis biovar 1 (strain 1330)</name>
    <dbReference type="NCBI Taxonomy" id="204722"/>
    <lineage>
        <taxon>Bacteria</taxon>
        <taxon>Pseudomonadati</taxon>
        <taxon>Pseudomonadota</taxon>
        <taxon>Alphaproteobacteria</taxon>
        <taxon>Hyphomicrobiales</taxon>
        <taxon>Brucellaceae</taxon>
        <taxon>Brucella/Ochrobactrum group</taxon>
        <taxon>Brucella</taxon>
    </lineage>
</organism>
<protein>
    <recommendedName>
        <fullName>Probable multidrug resistance protein NorM</fullName>
    </recommendedName>
    <alternativeName>
        <fullName>Multidrug-efflux transporter</fullName>
    </alternativeName>
</protein>
<name>NORM_BRUSU</name>
<dbReference type="EMBL" id="AE014291">
    <property type="protein sequence ID" value="AAN29288.1"/>
    <property type="molecule type" value="Genomic_DNA"/>
</dbReference>
<dbReference type="EMBL" id="CP002997">
    <property type="protein sequence ID" value="AEM17701.1"/>
    <property type="molecule type" value="Genomic_DNA"/>
</dbReference>
<dbReference type="PIR" id="AC3450">
    <property type="entry name" value="AC3450"/>
</dbReference>
<dbReference type="RefSeq" id="WP_004682927.1">
    <property type="nucleotide sequence ID" value="NZ_KN046804.1"/>
</dbReference>
<dbReference type="SMR" id="Q8G2I1"/>
<dbReference type="KEGG" id="bms:BR0339"/>
<dbReference type="KEGG" id="bsi:BS1330_I0340"/>
<dbReference type="PATRIC" id="fig|204722.21.peg.2499"/>
<dbReference type="HOGENOM" id="CLU_012893_6_3_5"/>
<dbReference type="PhylomeDB" id="Q8G2I1"/>
<dbReference type="Proteomes" id="UP000007104">
    <property type="component" value="Chromosome I"/>
</dbReference>
<dbReference type="GO" id="GO:0005886">
    <property type="term" value="C:plasma membrane"/>
    <property type="evidence" value="ECO:0007669"/>
    <property type="project" value="UniProtKB-SubCell"/>
</dbReference>
<dbReference type="GO" id="GO:0015297">
    <property type="term" value="F:antiporter activity"/>
    <property type="evidence" value="ECO:0007669"/>
    <property type="project" value="UniProtKB-KW"/>
</dbReference>
<dbReference type="GO" id="GO:0042910">
    <property type="term" value="F:xenobiotic transmembrane transporter activity"/>
    <property type="evidence" value="ECO:0007669"/>
    <property type="project" value="InterPro"/>
</dbReference>
<dbReference type="GO" id="GO:0006811">
    <property type="term" value="P:monoatomic ion transport"/>
    <property type="evidence" value="ECO:0007669"/>
    <property type="project" value="UniProtKB-KW"/>
</dbReference>
<dbReference type="CDD" id="cd13131">
    <property type="entry name" value="MATE_NorM_like"/>
    <property type="match status" value="1"/>
</dbReference>
<dbReference type="InterPro" id="IPR002528">
    <property type="entry name" value="MATE_fam"/>
</dbReference>
<dbReference type="InterPro" id="IPR050222">
    <property type="entry name" value="MATE_MdtK"/>
</dbReference>
<dbReference type="InterPro" id="IPR048279">
    <property type="entry name" value="MdtK-like"/>
</dbReference>
<dbReference type="NCBIfam" id="TIGR00797">
    <property type="entry name" value="matE"/>
    <property type="match status" value="1"/>
</dbReference>
<dbReference type="PANTHER" id="PTHR43298:SF2">
    <property type="entry name" value="FMN_FAD EXPORTER YEEO-RELATED"/>
    <property type="match status" value="1"/>
</dbReference>
<dbReference type="PANTHER" id="PTHR43298">
    <property type="entry name" value="MULTIDRUG RESISTANCE PROTEIN NORM-RELATED"/>
    <property type="match status" value="1"/>
</dbReference>
<dbReference type="Pfam" id="PF01554">
    <property type="entry name" value="MatE"/>
    <property type="match status" value="2"/>
</dbReference>
<dbReference type="PIRSF" id="PIRSF006603">
    <property type="entry name" value="DinF"/>
    <property type="match status" value="1"/>
</dbReference>
<reference key="1">
    <citation type="journal article" date="2002" name="Proc. Natl. Acad. Sci. U.S.A.">
        <title>The Brucella suis genome reveals fundamental similarities between animal and plant pathogens and symbionts.</title>
        <authorList>
            <person name="Paulsen I.T."/>
            <person name="Seshadri R."/>
            <person name="Nelson K.E."/>
            <person name="Eisen J.A."/>
            <person name="Heidelberg J.F."/>
            <person name="Read T.D."/>
            <person name="Dodson R.J."/>
            <person name="Umayam L.A."/>
            <person name="Brinkac L.M."/>
            <person name="Beanan M.J."/>
            <person name="Daugherty S.C."/>
            <person name="DeBoy R.T."/>
            <person name="Durkin A.S."/>
            <person name="Kolonay J.F."/>
            <person name="Madupu R."/>
            <person name="Nelson W.C."/>
            <person name="Ayodeji B."/>
            <person name="Kraul M."/>
            <person name="Shetty J."/>
            <person name="Malek J.A."/>
            <person name="Van Aken S.E."/>
            <person name="Riedmuller S."/>
            <person name="Tettelin H."/>
            <person name="Gill S.R."/>
            <person name="White O."/>
            <person name="Salzberg S.L."/>
            <person name="Hoover D.L."/>
            <person name="Lindler L.E."/>
            <person name="Halling S.M."/>
            <person name="Boyle S.M."/>
            <person name="Fraser C.M."/>
        </authorList>
    </citation>
    <scope>NUCLEOTIDE SEQUENCE [LARGE SCALE GENOMIC DNA]</scope>
    <source>
        <strain>1330</strain>
    </source>
</reference>
<reference key="2">
    <citation type="journal article" date="2011" name="J. Bacteriol.">
        <title>Revised genome sequence of Brucella suis 1330.</title>
        <authorList>
            <person name="Tae H."/>
            <person name="Shallom S."/>
            <person name="Settlage R."/>
            <person name="Preston D."/>
            <person name="Adams L.G."/>
            <person name="Garner H.R."/>
        </authorList>
    </citation>
    <scope>NUCLEOTIDE SEQUENCE [LARGE SCALE GENOMIC DNA]</scope>
    <source>
        <strain>1330</strain>
    </source>
</reference>
<feature type="chain" id="PRO_0000164209" description="Probable multidrug resistance protein NorM">
    <location>
        <begin position="1"/>
        <end position="471"/>
    </location>
</feature>
<feature type="transmembrane region" description="Helical" evidence="2">
    <location>
        <begin position="30"/>
        <end position="52"/>
    </location>
</feature>
<feature type="transmembrane region" description="Helical" evidence="2">
    <location>
        <begin position="67"/>
        <end position="89"/>
    </location>
</feature>
<feature type="transmembrane region" description="Helical" evidence="2">
    <location>
        <begin position="110"/>
        <end position="132"/>
    </location>
</feature>
<feature type="transmembrane region" description="Helical" evidence="2">
    <location>
        <begin position="147"/>
        <end position="169"/>
    </location>
</feature>
<feature type="transmembrane region" description="Helical" evidence="2">
    <location>
        <begin position="176"/>
        <end position="198"/>
    </location>
</feature>
<feature type="transmembrane region" description="Helical" evidence="2">
    <location>
        <begin position="208"/>
        <end position="230"/>
    </location>
</feature>
<feature type="transmembrane region" description="Helical" evidence="2">
    <location>
        <begin position="255"/>
        <end position="277"/>
    </location>
</feature>
<feature type="transmembrane region" description="Helical" evidence="2">
    <location>
        <begin position="287"/>
        <end position="309"/>
    </location>
</feature>
<feature type="transmembrane region" description="Helical" evidence="2">
    <location>
        <begin position="330"/>
        <end position="352"/>
    </location>
</feature>
<feature type="transmembrane region" description="Helical" evidence="2">
    <location>
        <begin position="372"/>
        <end position="389"/>
    </location>
</feature>
<feature type="transmembrane region" description="Helical" evidence="2">
    <location>
        <begin position="410"/>
        <end position="432"/>
    </location>
</feature>
<feature type="transmembrane region" description="Helical" evidence="2">
    <location>
        <begin position="436"/>
        <end position="458"/>
    </location>
</feature>
<accession>Q8G2I1</accession>
<accession>G0K695</accession>
<proteinExistence type="inferred from homology"/>
<gene>
    <name type="primary">norM</name>
    <name type="ordered locus">BR0339</name>
    <name type="ordered locus">BS1330_I0340</name>
</gene>
<evidence type="ECO:0000250" key="1"/>
<evidence type="ECO:0000255" key="2"/>
<evidence type="ECO:0000305" key="3"/>
<comment type="function">
    <text evidence="1">Multidrug efflux pump.</text>
</comment>
<comment type="subcellular location">
    <subcellularLocation>
        <location evidence="1">Cell inner membrane</location>
        <topology evidence="1">Multi-pass membrane protein</topology>
    </subcellularLocation>
</comment>
<comment type="similarity">
    <text evidence="3">Belongs to the multi antimicrobial extrusion (MATE) (TC 2.A.66.1) family.</text>
</comment>
<sequence>MDGTFDAGFREPTISKANRWGREMVVALKLGWPLIFTNLSQAALTATDVIFIGRLGADTLASALLATSFYHTLMIFSMGLVSAVMPMIAIALGKNRHSVRDVRRTVRQGFWSAIMIVIPLWVVLWHCEEIFLFLGQRPDIAARSTDFMHTLQWALLPYLFYIVLRSFFAAMEKPMWTLLVAALAIGFNALAGWTLIFGHFGFAPMGLHGAGMATTASSTMMFLGLAFITLRHPRFRRYHLFGRFWRPDWPRLIELWRIGLPMALTFVFETSIFYAAVVMMGRIGPTAMAAHAVAIQIASLSFMVPLGFGQVATVRVGRAYGRGDPKAIAYAGWSAYALGVGFMALMGILMVLMPRVFIGIFLNLNDPQNLPVMELAVTFLALAALFQIVDGAQAVAAGMLRGLRDTRIPMLLALFGYWGVGLPLGAVLAFQFGMGGVGIWLGLAAGLGMVAVLMTIRWRRHLAHVSAVAAA</sequence>